<proteinExistence type="evidence at transcript level"/>
<accession>P0C7P1</accession>
<accession>B7ZMD9</accession>
<protein>
    <recommendedName>
        <fullName>RNA-binding motif protein, Y chromosome, family 1 member D</fullName>
    </recommendedName>
</protein>
<dbReference type="EMBL" id="AC007322">
    <property type="status" value="NOT_ANNOTATED_CDS"/>
    <property type="molecule type" value="Genomic_DNA"/>
</dbReference>
<dbReference type="EMBL" id="BC136862">
    <property type="protein sequence ID" value="AAI36863.1"/>
    <property type="molecule type" value="mRNA"/>
</dbReference>
<dbReference type="EMBL" id="BC144459">
    <property type="protein sequence ID" value="AAI44460.1"/>
    <property type="molecule type" value="mRNA"/>
</dbReference>
<dbReference type="CCDS" id="CCDS35480.1">
    <molecule id="P0C7P1-1"/>
</dbReference>
<dbReference type="CCDS" id="CCDS83521.1">
    <molecule id="P0C7P1-2"/>
</dbReference>
<dbReference type="RefSeq" id="NP_001006120.2">
    <molecule id="P0C7P1-1"/>
    <property type="nucleotide sequence ID" value="NM_001006120.3"/>
</dbReference>
<dbReference type="RefSeq" id="NP_001307878.1">
    <molecule id="P0C7P1-2"/>
    <property type="nucleotide sequence ID" value="NM_001320949.1"/>
</dbReference>
<dbReference type="RefSeq" id="XP_011529788.1">
    <molecule id="P0C7P1-1"/>
    <property type="nucleotide sequence ID" value="XM_011531486.2"/>
</dbReference>
<dbReference type="SMR" id="P0C7P1"/>
<dbReference type="BioGRID" id="132080">
    <property type="interactions" value="2"/>
</dbReference>
<dbReference type="FunCoup" id="P0C7P1">
    <property type="interactions" value="22"/>
</dbReference>
<dbReference type="STRING" id="9606.ENSP00000372127"/>
<dbReference type="iPTMnet" id="P0C7P1"/>
<dbReference type="PhosphoSitePlus" id="P0C7P1"/>
<dbReference type="BioMuta" id="RBMY1D"/>
<dbReference type="DMDM" id="190360153"/>
<dbReference type="MassIVE" id="P0C7P1"/>
<dbReference type="PeptideAtlas" id="P0C7P1"/>
<dbReference type="Antibodypedia" id="71048">
    <property type="antibodies" value="53 antibodies from 7 providers"/>
</dbReference>
<dbReference type="DNASU" id="378949"/>
<dbReference type="Ensembl" id="ENST00000382680.5">
    <molecule id="P0C7P1-1"/>
    <property type="protein sequence ID" value="ENSP00000372127.1"/>
    <property type="gene ID" value="ENSG00000244395.6"/>
</dbReference>
<dbReference type="Ensembl" id="ENST00000418956.2">
    <molecule id="P0C7P1-2"/>
    <property type="protein sequence ID" value="ENSP00000399181.2"/>
    <property type="gene ID" value="ENSG00000244395.6"/>
</dbReference>
<dbReference type="GeneID" id="378949"/>
<dbReference type="KEGG" id="hsa:378949"/>
<dbReference type="MANE-Select" id="ENST00000382680.5">
    <property type="protein sequence ID" value="ENSP00000372127.1"/>
    <property type="RefSeq nucleotide sequence ID" value="NM_001006120.3"/>
    <property type="RefSeq protein sequence ID" value="NP_001006120.2"/>
</dbReference>
<dbReference type="UCSC" id="uc004fuu.3">
    <molecule id="P0C7P1-1"/>
    <property type="organism name" value="human"/>
</dbReference>
<dbReference type="AGR" id="HGNC:23915"/>
<dbReference type="CTD" id="378949"/>
<dbReference type="GeneCards" id="RBMY1D"/>
<dbReference type="HGNC" id="HGNC:23915">
    <property type="gene designation" value="RBMY1D"/>
</dbReference>
<dbReference type="HPA" id="ENSG00000244395">
    <property type="expression patterns" value="Tissue enriched (testis)"/>
</dbReference>
<dbReference type="neXtProt" id="NX_P0C7P1"/>
<dbReference type="PharmGKB" id="PA134863616"/>
<dbReference type="VEuPathDB" id="HostDB:ENSG00000244395"/>
<dbReference type="GeneTree" id="ENSGT00940000163524"/>
<dbReference type="HOGENOM" id="CLU_042286_0_0_1"/>
<dbReference type="InParanoid" id="P0C7P1"/>
<dbReference type="PAN-GO" id="P0C7P1">
    <property type="GO annotations" value="3 GO annotations based on evolutionary models"/>
</dbReference>
<dbReference type="PhylomeDB" id="P0C7P1"/>
<dbReference type="TreeFam" id="TF331833"/>
<dbReference type="PathwayCommons" id="P0C7P1"/>
<dbReference type="BioGRID-ORCS" id="378949">
    <property type="hits" value="8 hits in 252 CRISPR screens"/>
</dbReference>
<dbReference type="GenomeRNAi" id="378949"/>
<dbReference type="Pharos" id="P0C7P1">
    <property type="development level" value="Tdark"/>
</dbReference>
<dbReference type="PRO" id="PR:P0C7P1"/>
<dbReference type="Proteomes" id="UP000005640">
    <property type="component" value="Chromosome Y"/>
</dbReference>
<dbReference type="RNAct" id="P0C7P1">
    <property type="molecule type" value="protein"/>
</dbReference>
<dbReference type="Bgee" id="ENSG00000244395">
    <property type="expression patterns" value="Expressed in primordial germ cell in gonad and 2 other cell types or tissues"/>
</dbReference>
<dbReference type="GO" id="GO:0005730">
    <property type="term" value="C:nucleolus"/>
    <property type="evidence" value="ECO:0000314"/>
    <property type="project" value="HPA"/>
</dbReference>
<dbReference type="GO" id="GO:0005654">
    <property type="term" value="C:nucleoplasm"/>
    <property type="evidence" value="ECO:0000314"/>
    <property type="project" value="HPA"/>
</dbReference>
<dbReference type="GO" id="GO:0005681">
    <property type="term" value="C:spliceosomal complex"/>
    <property type="evidence" value="ECO:0000318"/>
    <property type="project" value="GO_Central"/>
</dbReference>
<dbReference type="GO" id="GO:0003723">
    <property type="term" value="F:RNA binding"/>
    <property type="evidence" value="ECO:0000318"/>
    <property type="project" value="GO_Central"/>
</dbReference>
<dbReference type="GO" id="GO:0006397">
    <property type="term" value="P:mRNA processing"/>
    <property type="evidence" value="ECO:0007669"/>
    <property type="project" value="UniProtKB-KW"/>
</dbReference>
<dbReference type="GO" id="GO:0048026">
    <property type="term" value="P:positive regulation of mRNA splicing, via spliceosome"/>
    <property type="evidence" value="ECO:0000318"/>
    <property type="project" value="GO_Central"/>
</dbReference>
<dbReference type="GO" id="GO:0008380">
    <property type="term" value="P:RNA splicing"/>
    <property type="evidence" value="ECO:0007669"/>
    <property type="project" value="UniProtKB-KW"/>
</dbReference>
<dbReference type="CDD" id="cd12382">
    <property type="entry name" value="RRM_RBMX_like"/>
    <property type="match status" value="1"/>
</dbReference>
<dbReference type="FunFam" id="3.30.70.330:FF:000470">
    <property type="entry name" value="RNA-binding motif protein, Y chromosome, family 1 member F/J"/>
    <property type="match status" value="1"/>
</dbReference>
<dbReference type="Gene3D" id="3.30.70.330">
    <property type="match status" value="1"/>
</dbReference>
<dbReference type="InterPro" id="IPR012677">
    <property type="entry name" value="Nucleotide-bd_a/b_plait_sf"/>
</dbReference>
<dbReference type="InterPro" id="IPR035979">
    <property type="entry name" value="RBD_domain_sf"/>
</dbReference>
<dbReference type="InterPro" id="IPR050441">
    <property type="entry name" value="RBM"/>
</dbReference>
<dbReference type="InterPro" id="IPR012604">
    <property type="entry name" value="RBM1CTR"/>
</dbReference>
<dbReference type="InterPro" id="IPR000504">
    <property type="entry name" value="RRM_dom"/>
</dbReference>
<dbReference type="PANTHER" id="PTHR48034">
    <property type="entry name" value="TRANSFORMER-2 SEX-DETERMINING PROTEIN-RELATED"/>
    <property type="match status" value="1"/>
</dbReference>
<dbReference type="Pfam" id="PF08081">
    <property type="entry name" value="RBM1CTR"/>
    <property type="match status" value="1"/>
</dbReference>
<dbReference type="Pfam" id="PF00076">
    <property type="entry name" value="RRM_1"/>
    <property type="match status" value="1"/>
</dbReference>
<dbReference type="SMART" id="SM00360">
    <property type="entry name" value="RRM"/>
    <property type="match status" value="1"/>
</dbReference>
<dbReference type="SUPFAM" id="SSF54928">
    <property type="entry name" value="RNA-binding domain, RBD"/>
    <property type="match status" value="1"/>
</dbReference>
<dbReference type="PROSITE" id="PS50102">
    <property type="entry name" value="RRM"/>
    <property type="match status" value="1"/>
</dbReference>
<evidence type="ECO:0000255" key="1">
    <source>
        <dbReference type="PROSITE-ProRule" id="PRU00176"/>
    </source>
</evidence>
<evidence type="ECO:0000256" key="2">
    <source>
        <dbReference type="SAM" id="MobiDB-lite"/>
    </source>
</evidence>
<evidence type="ECO:0000303" key="3">
    <source>
    </source>
</evidence>
<keyword id="KW-0025">Alternative splicing</keyword>
<keyword id="KW-0507">mRNA processing</keyword>
<keyword id="KW-0508">mRNA splicing</keyword>
<keyword id="KW-0539">Nucleus</keyword>
<keyword id="KW-1185">Reference proteome</keyword>
<keyword id="KW-0694">RNA-binding</keyword>
<name>RBY1D_HUMAN</name>
<feature type="chain" id="PRO_0000341538" description="RNA-binding motif protein, Y chromosome, family 1 member D">
    <location>
        <begin position="1"/>
        <end position="496"/>
    </location>
</feature>
<feature type="domain" description="RRM" evidence="1">
    <location>
        <begin position="8"/>
        <end position="85"/>
    </location>
</feature>
<feature type="region of interest" description="Disordered" evidence="2">
    <location>
        <begin position="67"/>
        <end position="349"/>
    </location>
</feature>
<feature type="region of interest" description="Disordered" evidence="2">
    <location>
        <begin position="452"/>
        <end position="496"/>
    </location>
</feature>
<feature type="compositionally biased region" description="Low complexity" evidence="2">
    <location>
        <begin position="97"/>
        <end position="114"/>
    </location>
</feature>
<feature type="compositionally biased region" description="Low complexity" evidence="2">
    <location>
        <begin position="149"/>
        <end position="159"/>
    </location>
</feature>
<feature type="compositionally biased region" description="Polar residues" evidence="2">
    <location>
        <begin position="175"/>
        <end position="184"/>
    </location>
</feature>
<feature type="compositionally biased region" description="Basic and acidic residues" evidence="2">
    <location>
        <begin position="204"/>
        <end position="214"/>
    </location>
</feature>
<feature type="compositionally biased region" description="Basic and acidic residues" evidence="2">
    <location>
        <begin position="242"/>
        <end position="253"/>
    </location>
</feature>
<feature type="compositionally biased region" description="Basic and acidic residues" evidence="2">
    <location>
        <begin position="276"/>
        <end position="289"/>
    </location>
</feature>
<feature type="compositionally biased region" description="Basic and acidic residues" evidence="2">
    <location>
        <begin position="313"/>
        <end position="326"/>
    </location>
</feature>
<feature type="compositionally biased region" description="Basic and acidic residues" evidence="2">
    <location>
        <begin position="335"/>
        <end position="349"/>
    </location>
</feature>
<feature type="compositionally biased region" description="Basic and acidic residues" evidence="2">
    <location>
        <begin position="484"/>
        <end position="496"/>
    </location>
</feature>
<feature type="splice variant" id="VSP_056242" description="In isoform 2." evidence="3">
    <location>
        <begin position="327"/>
        <end position="363"/>
    </location>
</feature>
<comment type="function">
    <text>RNA-binding protein which may be involved in spermatogenesis. Required for sperm development, possibly by participating in pre-mRNA splicing in the testis.</text>
</comment>
<comment type="subunit">
    <text>Interacts with splicing factor proteins SFRS3/SRP20, TRA2B/SFRS10, KHDRBS1/SAM68 and KHDRBS3.</text>
</comment>
<comment type="subcellular location">
    <subcellularLocation>
        <location>Nucleus</location>
    </subcellularLocation>
</comment>
<comment type="alternative products">
    <event type="alternative splicing"/>
    <isoform>
        <id>P0C7P1-1</id>
        <name>1</name>
        <sequence type="displayed"/>
    </isoform>
    <isoform>
        <id>P0C7P1-2</id>
        <name>2</name>
        <sequence type="described" ref="VSP_056242"/>
    </isoform>
</comment>
<comment type="tissue specificity">
    <text>Testis-specific.</text>
</comment>
<comment type="developmental stage">
    <text>Expressed in all of the transcriptionally active stages of germ cell development from spermatogonia through spermatocytes to round spermatids.</text>
</comment>
<comment type="miscellaneous">
    <text>The RBMY1 proteins are encoded by repeated regions of the Y chromosome, mostly within the AZFb region. The exact number of functional copies is unclear and may vary between individuals, and some of them may represent pseudogenes. The proteins are very similar, which makes the characterization of each protein difficult. Thus, most experiments do not discriminate between the different members. One can therefore suppose that reported interactions with a RBMY1 protein involve all the proteins.</text>
</comment>
<organism>
    <name type="scientific">Homo sapiens</name>
    <name type="common">Human</name>
    <dbReference type="NCBI Taxonomy" id="9606"/>
    <lineage>
        <taxon>Eukaryota</taxon>
        <taxon>Metazoa</taxon>
        <taxon>Chordata</taxon>
        <taxon>Craniata</taxon>
        <taxon>Vertebrata</taxon>
        <taxon>Euteleostomi</taxon>
        <taxon>Mammalia</taxon>
        <taxon>Eutheria</taxon>
        <taxon>Euarchontoglires</taxon>
        <taxon>Primates</taxon>
        <taxon>Haplorrhini</taxon>
        <taxon>Catarrhini</taxon>
        <taxon>Hominidae</taxon>
        <taxon>Homo</taxon>
    </lineage>
</organism>
<sequence>MVEADHPGKLFIGGLNRETNEKMLKAVFGKHGPISEVLLIKDRTSKSRGFAFITFENPADAKNAAKDMNGKSLHGKAIKVEQAKKPSFQSGGRRRPPASSRNRSPSGSLRSARGSRGGTRGWLPSQEGHLDDGGYTPDLKMSYSRGLIPVKRGPSSRSGGPPPKKSAPSAVARSNSWMGSQGPMSQRRENYGVPPRRATISSWRNDRMSTRHDGYATNDGNHPSCQETRDYAPPSRGYAYRDNGHSNRDEHSSRGYRNHRSSRETRDYAPPSRGHAYRDYGHSRRDESYSRGYRNRRSSRETREYAPPSRGHGYRDYGHSRRHESYSRGYRNHPSSRETRDYAPPHRDYAYRDYGHSSWDEHSSRGYSYHDGYGEALGRDHSEHLSGSSYRDALQRYGTSHGAPPARGPRMSYGGSTCHAYSNTRDRYGRSWESYSSCGDFHYCDREHVCRKDQRNPPSLGRVLPDPREACGSSSYVASIVDGGESRSEKGDSSRY</sequence>
<reference key="1">
    <citation type="journal article" date="2003" name="Nature">
        <title>The male-specific region of the human Y chromosome is a mosaic of discrete sequence classes.</title>
        <authorList>
            <person name="Skaletsky H."/>
            <person name="Kuroda-Kawaguchi T."/>
            <person name="Minx P.J."/>
            <person name="Cordum H.S."/>
            <person name="Hillier L.W."/>
            <person name="Brown L.G."/>
            <person name="Repping S."/>
            <person name="Pyntikova T."/>
            <person name="Ali J."/>
            <person name="Bieri T."/>
            <person name="Chinwalla A."/>
            <person name="Delehaunty A."/>
            <person name="Delehaunty K."/>
            <person name="Du H."/>
            <person name="Fewell G."/>
            <person name="Fulton L."/>
            <person name="Fulton R."/>
            <person name="Graves T.A."/>
            <person name="Hou S.-F."/>
            <person name="Latrielle P."/>
            <person name="Leonard S."/>
            <person name="Mardis E."/>
            <person name="Maupin R."/>
            <person name="McPherson J."/>
            <person name="Miner T."/>
            <person name="Nash W."/>
            <person name="Nguyen C."/>
            <person name="Ozersky P."/>
            <person name="Pepin K."/>
            <person name="Rock S."/>
            <person name="Rohlfing T."/>
            <person name="Scott K."/>
            <person name="Schultz B."/>
            <person name="Strong C."/>
            <person name="Tin-Wollam A."/>
            <person name="Yang S.-P."/>
            <person name="Waterston R.H."/>
            <person name="Wilson R.K."/>
            <person name="Rozen S."/>
            <person name="Page D.C."/>
        </authorList>
    </citation>
    <scope>NUCLEOTIDE SEQUENCE [LARGE SCALE GENOMIC DNA]</scope>
</reference>
<reference key="2">
    <citation type="journal article" date="2004" name="Genome Res.">
        <title>The status, quality, and expansion of the NIH full-length cDNA project: the Mammalian Gene Collection (MGC).</title>
        <authorList>
            <consortium name="The MGC Project Team"/>
        </authorList>
    </citation>
    <scope>NUCLEOTIDE SEQUENCE [LARGE SCALE MRNA] (ISOFORM 2)</scope>
    <source>
        <tissue>Testis</tissue>
    </source>
</reference>
<gene>
    <name type="primary">RBMY1D</name>
</gene>